<comment type="function">
    <text evidence="1">NDH-1 shuttles electrons from NADH, via FMN and iron-sulfur (Fe-S) centers, to quinones in the respiratory chain. Couples the redox reaction to proton translocation (for every two electrons transferred, four hydrogen ions are translocated across the cytoplasmic membrane), and thus conserves the redox energy in a proton gradient (By similarity).</text>
</comment>
<comment type="catalytic activity">
    <reaction evidence="2">
        <text>a quinone + NADH + 5 H(+)(in) = a quinol + NAD(+) + 4 H(+)(out)</text>
        <dbReference type="Rhea" id="RHEA:57888"/>
        <dbReference type="ChEBI" id="CHEBI:15378"/>
        <dbReference type="ChEBI" id="CHEBI:24646"/>
        <dbReference type="ChEBI" id="CHEBI:57540"/>
        <dbReference type="ChEBI" id="CHEBI:57945"/>
        <dbReference type="ChEBI" id="CHEBI:132124"/>
    </reaction>
</comment>
<comment type="cofactor">
    <cofactor evidence="2">
        <name>[4Fe-4S] cluster</name>
        <dbReference type="ChEBI" id="CHEBI:49883"/>
    </cofactor>
    <text evidence="2">Binds 1 [4Fe-4S] cluster.</text>
</comment>
<comment type="subunit">
    <text evidence="2">NDH-1 is composed of 14 different subunits. Subunits NuoB, C, D, E, F, and G constitute the peripheral sector of the complex.</text>
</comment>
<comment type="subcellular location">
    <subcellularLocation>
        <location evidence="2">Cell inner membrane</location>
        <topology evidence="2">Peripheral membrane protein</topology>
        <orientation evidence="2">Cytoplasmic side</orientation>
    </subcellularLocation>
</comment>
<comment type="similarity">
    <text evidence="2">Belongs to the complex I 20 kDa subunit family.</text>
</comment>
<evidence type="ECO:0000250" key="1"/>
<evidence type="ECO:0000255" key="2">
    <source>
        <dbReference type="HAMAP-Rule" id="MF_01356"/>
    </source>
</evidence>
<name>NUOB2_CERS5</name>
<protein>
    <recommendedName>
        <fullName evidence="2">NADH-quinone oxidoreductase subunit B 2</fullName>
        <ecNumber evidence="2">7.1.1.-</ecNumber>
    </recommendedName>
    <alternativeName>
        <fullName evidence="2">NADH dehydrogenase I subunit B 2</fullName>
    </alternativeName>
    <alternativeName>
        <fullName evidence="2">NDH-1 subunit B 2</fullName>
    </alternativeName>
</protein>
<gene>
    <name evidence="2" type="primary">nuoB2</name>
    <name type="ordered locus">Rsph17025_2006</name>
</gene>
<feature type="chain" id="PRO_0000358467" description="NADH-quinone oxidoreductase subunit B 2">
    <location>
        <begin position="1"/>
        <end position="174"/>
    </location>
</feature>
<feature type="binding site" evidence="2">
    <location>
        <position position="53"/>
    </location>
    <ligand>
        <name>[4Fe-4S] cluster</name>
        <dbReference type="ChEBI" id="CHEBI:49883"/>
    </ligand>
</feature>
<feature type="binding site" evidence="2">
    <location>
        <position position="54"/>
    </location>
    <ligand>
        <name>[4Fe-4S] cluster</name>
        <dbReference type="ChEBI" id="CHEBI:49883"/>
    </ligand>
</feature>
<feature type="binding site" evidence="2">
    <location>
        <position position="118"/>
    </location>
    <ligand>
        <name>[4Fe-4S] cluster</name>
        <dbReference type="ChEBI" id="CHEBI:49883"/>
    </ligand>
</feature>
<feature type="binding site" evidence="2">
    <location>
        <position position="148"/>
    </location>
    <ligand>
        <name>[4Fe-4S] cluster</name>
        <dbReference type="ChEBI" id="CHEBI:49883"/>
    </ligand>
</feature>
<dbReference type="EC" id="7.1.1.-" evidence="2"/>
<dbReference type="EMBL" id="CP000661">
    <property type="protein sequence ID" value="ABP70897.1"/>
    <property type="molecule type" value="Genomic_DNA"/>
</dbReference>
<dbReference type="SMR" id="A4WU33"/>
<dbReference type="STRING" id="349102.Rsph17025_2006"/>
<dbReference type="KEGG" id="rsq:Rsph17025_2006"/>
<dbReference type="eggNOG" id="COG0377">
    <property type="taxonomic scope" value="Bacteria"/>
</dbReference>
<dbReference type="HOGENOM" id="CLU_055737_7_0_5"/>
<dbReference type="GO" id="GO:0005886">
    <property type="term" value="C:plasma membrane"/>
    <property type="evidence" value="ECO:0007669"/>
    <property type="project" value="UniProtKB-SubCell"/>
</dbReference>
<dbReference type="GO" id="GO:0045271">
    <property type="term" value="C:respiratory chain complex I"/>
    <property type="evidence" value="ECO:0007669"/>
    <property type="project" value="TreeGrafter"/>
</dbReference>
<dbReference type="GO" id="GO:0051539">
    <property type="term" value="F:4 iron, 4 sulfur cluster binding"/>
    <property type="evidence" value="ECO:0007669"/>
    <property type="project" value="UniProtKB-KW"/>
</dbReference>
<dbReference type="GO" id="GO:0005506">
    <property type="term" value="F:iron ion binding"/>
    <property type="evidence" value="ECO:0007669"/>
    <property type="project" value="UniProtKB-UniRule"/>
</dbReference>
<dbReference type="GO" id="GO:0008137">
    <property type="term" value="F:NADH dehydrogenase (ubiquinone) activity"/>
    <property type="evidence" value="ECO:0007669"/>
    <property type="project" value="InterPro"/>
</dbReference>
<dbReference type="GO" id="GO:0050136">
    <property type="term" value="F:NADH:ubiquinone reductase (non-electrogenic) activity"/>
    <property type="evidence" value="ECO:0007669"/>
    <property type="project" value="UniProtKB-UniRule"/>
</dbReference>
<dbReference type="GO" id="GO:0048038">
    <property type="term" value="F:quinone binding"/>
    <property type="evidence" value="ECO:0007669"/>
    <property type="project" value="UniProtKB-KW"/>
</dbReference>
<dbReference type="GO" id="GO:0009060">
    <property type="term" value="P:aerobic respiration"/>
    <property type="evidence" value="ECO:0007669"/>
    <property type="project" value="TreeGrafter"/>
</dbReference>
<dbReference type="GO" id="GO:0015990">
    <property type="term" value="P:electron transport coupled proton transport"/>
    <property type="evidence" value="ECO:0007669"/>
    <property type="project" value="TreeGrafter"/>
</dbReference>
<dbReference type="FunFam" id="3.40.50.12280:FF:000001">
    <property type="entry name" value="NADH-quinone oxidoreductase subunit B 2"/>
    <property type="match status" value="1"/>
</dbReference>
<dbReference type="Gene3D" id="3.40.50.12280">
    <property type="match status" value="1"/>
</dbReference>
<dbReference type="HAMAP" id="MF_01356">
    <property type="entry name" value="NDH1_NuoB"/>
    <property type="match status" value="1"/>
</dbReference>
<dbReference type="InterPro" id="IPR006137">
    <property type="entry name" value="NADH_UbQ_OxRdtase-like_20kDa"/>
</dbReference>
<dbReference type="InterPro" id="IPR006138">
    <property type="entry name" value="NADH_UQ_OxRdtase_20Kd_su"/>
</dbReference>
<dbReference type="NCBIfam" id="TIGR01957">
    <property type="entry name" value="nuoB_fam"/>
    <property type="match status" value="1"/>
</dbReference>
<dbReference type="NCBIfam" id="NF005012">
    <property type="entry name" value="PRK06411.1"/>
    <property type="match status" value="1"/>
</dbReference>
<dbReference type="PANTHER" id="PTHR11995">
    <property type="entry name" value="NADH DEHYDROGENASE"/>
    <property type="match status" value="1"/>
</dbReference>
<dbReference type="PANTHER" id="PTHR11995:SF14">
    <property type="entry name" value="NADH DEHYDROGENASE [UBIQUINONE] IRON-SULFUR PROTEIN 7, MITOCHONDRIAL"/>
    <property type="match status" value="1"/>
</dbReference>
<dbReference type="Pfam" id="PF01058">
    <property type="entry name" value="Oxidored_q6"/>
    <property type="match status" value="1"/>
</dbReference>
<dbReference type="SUPFAM" id="SSF56770">
    <property type="entry name" value="HydA/Nqo6-like"/>
    <property type="match status" value="1"/>
</dbReference>
<dbReference type="PROSITE" id="PS01150">
    <property type="entry name" value="COMPLEX1_20K"/>
    <property type="match status" value="1"/>
</dbReference>
<accession>A4WU33</accession>
<reference key="1">
    <citation type="submission" date="2007-04" db="EMBL/GenBank/DDBJ databases">
        <title>Complete sequence of chromosome of Rhodobacter sphaeroides ATCC 17025.</title>
        <authorList>
            <consortium name="US DOE Joint Genome Institute"/>
            <person name="Copeland A."/>
            <person name="Lucas S."/>
            <person name="Lapidus A."/>
            <person name="Barry K."/>
            <person name="Detter J.C."/>
            <person name="Glavina del Rio T."/>
            <person name="Hammon N."/>
            <person name="Israni S."/>
            <person name="Dalin E."/>
            <person name="Tice H."/>
            <person name="Pitluck S."/>
            <person name="Chertkov O."/>
            <person name="Brettin T."/>
            <person name="Bruce D."/>
            <person name="Han C."/>
            <person name="Schmutz J."/>
            <person name="Larimer F."/>
            <person name="Land M."/>
            <person name="Hauser L."/>
            <person name="Kyrpides N."/>
            <person name="Kim E."/>
            <person name="Richardson P."/>
            <person name="Mackenzie C."/>
            <person name="Choudhary M."/>
            <person name="Donohue T.J."/>
            <person name="Kaplan S."/>
        </authorList>
    </citation>
    <scope>NUCLEOTIDE SEQUENCE [LARGE SCALE GENOMIC DNA]</scope>
    <source>
        <strain>ATCC 17025 / ATH 2.4.3</strain>
    </source>
</reference>
<organism>
    <name type="scientific">Cereibacter sphaeroides (strain ATCC 17025 / ATH 2.4.3)</name>
    <name type="common">Rhodobacter sphaeroides</name>
    <dbReference type="NCBI Taxonomy" id="349102"/>
    <lineage>
        <taxon>Bacteria</taxon>
        <taxon>Pseudomonadati</taxon>
        <taxon>Pseudomonadota</taxon>
        <taxon>Alphaproteobacteria</taxon>
        <taxon>Rhodobacterales</taxon>
        <taxon>Paracoccaceae</taxon>
        <taxon>Cereibacter</taxon>
    </lineage>
</organism>
<proteinExistence type="inferred from homology"/>
<keyword id="KW-0004">4Fe-4S</keyword>
<keyword id="KW-0997">Cell inner membrane</keyword>
<keyword id="KW-1003">Cell membrane</keyword>
<keyword id="KW-0408">Iron</keyword>
<keyword id="KW-0411">Iron-sulfur</keyword>
<keyword id="KW-0472">Membrane</keyword>
<keyword id="KW-0479">Metal-binding</keyword>
<keyword id="KW-0520">NAD</keyword>
<keyword id="KW-0874">Quinone</keyword>
<keyword id="KW-1278">Translocase</keyword>
<keyword id="KW-0813">Transport</keyword>
<keyword id="KW-0830">Ubiquinone</keyword>
<sequence>MTGLNTAGHDRDYDTAGLNRELQDKGFLLTTTEDLINWARTGSLHWMTFGLACCAVEMMHTSMPRYDVERFGVAPRASPRQSDVMIVAGTLTNKMAPALRKVYDQMPEPRYVISMGSCANGGGYYHYSYSVVRGCDRIVPVDIYVPGCPPTAEALLYGILQLQRRIRRTGTITR</sequence>